<comment type="function">
    <text evidence="1">Effector protein that plays different roles depending on the species and plant cultivars that interact with the pathogen. Acts as a virulence determinant by enhancing the development of disease symptoms and bacterial growth. Acts as an avirulence factor by eliciting hypersensitive response (HR) and plant resistance (By similarity).</text>
</comment>
<comment type="subcellular location">
    <subcellularLocation>
        <location evidence="3">Secreted</location>
    </subcellularLocation>
    <text>Secreted via type III secretion system (T3SS).</text>
</comment>
<comment type="induction">
    <text evidence="3">Transcriptionally induced by HrpL.</text>
</comment>
<comment type="similarity">
    <text evidence="4">Belongs to the HopAB family.</text>
</comment>
<protein>
    <recommendedName>
        <fullName>Effector protein hopAB1</fullName>
    </recommendedName>
</protein>
<dbReference type="EMBL" id="CP000059">
    <property type="protein sequence ID" value="AAZ37972.1"/>
    <property type="molecule type" value="Genomic_DNA"/>
</dbReference>
<dbReference type="RefSeq" id="WP_011282445.1">
    <property type="nucleotide sequence ID" value="NC_007274.1"/>
</dbReference>
<dbReference type="PDB" id="2LF6">
    <property type="method" value="NMR"/>
    <property type="chains" value="A=220-320"/>
</dbReference>
<dbReference type="PDBsum" id="2LF6"/>
<dbReference type="BMRB" id="Q48B61"/>
<dbReference type="SMR" id="Q48B61"/>
<dbReference type="KEGG" id="psp:PSPPH_A0127"/>
<dbReference type="eggNOG" id="ENOG5030NBE">
    <property type="taxonomic scope" value="Bacteria"/>
</dbReference>
<dbReference type="HOGENOM" id="CLU_505137_0_0_6"/>
<dbReference type="EvolutionaryTrace" id="Q48B61"/>
<dbReference type="Proteomes" id="UP000000551">
    <property type="component" value="Plasmid large"/>
</dbReference>
<dbReference type="GO" id="GO:0005576">
    <property type="term" value="C:extracellular region"/>
    <property type="evidence" value="ECO:0007669"/>
    <property type="project" value="UniProtKB-SubCell"/>
</dbReference>
<dbReference type="GO" id="GO:0052040">
    <property type="term" value="P:symbiont-mediated perturbation of host programmed cell death"/>
    <property type="evidence" value="ECO:0007669"/>
    <property type="project" value="UniProtKB-KW"/>
</dbReference>
<dbReference type="CDD" id="cd12803">
    <property type="entry name" value="HopAB_BID"/>
    <property type="match status" value="1"/>
</dbReference>
<dbReference type="CDD" id="cd12802">
    <property type="entry name" value="HopAB_PID"/>
    <property type="match status" value="1"/>
</dbReference>
<dbReference type="Gene3D" id="1.20.1280.110">
    <property type="match status" value="1"/>
</dbReference>
<dbReference type="Gene3D" id="3.30.40.110">
    <property type="entry name" value="AvrPtoB, C-terminal domain"/>
    <property type="match status" value="1"/>
</dbReference>
<dbReference type="Gene3D" id="1.20.1280.220">
    <property type="entry name" value="Effector protein HopAB, BAK1-interacting domain"/>
    <property type="match status" value="1"/>
</dbReference>
<dbReference type="InterPro" id="IPR015133">
    <property type="entry name" value="E3_ubiquit_lig_AvrPtoB"/>
</dbReference>
<dbReference type="InterPro" id="IPR031759">
    <property type="entry name" value="HopAB_BAK-bd"/>
</dbReference>
<dbReference type="InterPro" id="IPR038342">
    <property type="entry name" value="HopAB_BAK-bd_sf"/>
</dbReference>
<dbReference type="InterPro" id="IPR038448">
    <property type="entry name" value="HopAB_E3_ubiquit_lig_sf"/>
</dbReference>
<dbReference type="InterPro" id="IPR033743">
    <property type="entry name" value="HopAB_PID"/>
</dbReference>
<dbReference type="Pfam" id="PF09046">
    <property type="entry name" value="AvrPtoB-E3_ubiq"/>
    <property type="match status" value="1"/>
</dbReference>
<dbReference type="Pfam" id="PF16847">
    <property type="entry name" value="AvrPtoB_bdg"/>
    <property type="match status" value="1"/>
</dbReference>
<proteinExistence type="evidence at protein level"/>
<name>HPAB1_PSE14</name>
<evidence type="ECO:0000250" key="1"/>
<evidence type="ECO:0000256" key="2">
    <source>
        <dbReference type="SAM" id="MobiDB-lite"/>
    </source>
</evidence>
<evidence type="ECO:0000269" key="3">
    <source>
    </source>
</evidence>
<evidence type="ECO:0000305" key="4"/>
<evidence type="ECO:0007829" key="5">
    <source>
        <dbReference type="PDB" id="2LF6"/>
    </source>
</evidence>
<accession>Q48B61</accession>
<reference key="1">
    <citation type="journal article" date="2005" name="J. Bacteriol.">
        <title>Whole-genome sequence analysis of Pseudomonas syringae pv. phaseolicola 1448A reveals divergence among pathovars in genes involved in virulence and transposition.</title>
        <authorList>
            <person name="Joardar V."/>
            <person name="Lindeberg M."/>
            <person name="Jackson R.W."/>
            <person name="Selengut J."/>
            <person name="Dodson R."/>
            <person name="Brinkac L.M."/>
            <person name="Daugherty S.C."/>
            <person name="DeBoy R.T."/>
            <person name="Durkin A.S."/>
            <person name="Gwinn Giglio M."/>
            <person name="Madupu R."/>
            <person name="Nelson W.C."/>
            <person name="Rosovitz M.J."/>
            <person name="Sullivan S.A."/>
            <person name="Crabtree J."/>
            <person name="Creasy T."/>
            <person name="Davidsen T.M."/>
            <person name="Haft D.H."/>
            <person name="Zafar N."/>
            <person name="Zhou L."/>
            <person name="Halpin R."/>
            <person name="Holley T."/>
            <person name="Khouri H.M."/>
            <person name="Feldblyum T.V."/>
            <person name="White O."/>
            <person name="Fraser C.M."/>
            <person name="Chatterjee A.K."/>
            <person name="Cartinhour S."/>
            <person name="Schneider D."/>
            <person name="Mansfield J.W."/>
            <person name="Collmer A."/>
            <person name="Buell R."/>
        </authorList>
    </citation>
    <scope>NUCLEOTIDE SEQUENCE [LARGE SCALE GENOMIC DNA]</scope>
    <source>
        <strain>1448A / Race 6</strain>
    </source>
</reference>
<reference key="2">
    <citation type="journal article" date="2004" name="Mol. Plant Microbe Interact.">
        <title>Transcriptional regulation of components of the type III secretion system and effectors in Pseudomonas syringae pv. phaseolicola.</title>
        <authorList>
            <person name="Thwaites R."/>
            <person name="Spanu P.D."/>
            <person name="Panopoulos N.J."/>
            <person name="Stevens C."/>
            <person name="Mansfield J.W."/>
        </authorList>
    </citation>
    <scope>SUBCELLULAR LOCATION</scope>
    <scope>INDUCTION BY HRPL</scope>
</reference>
<sequence>MPGINGAGPSNFFWQWRTDGEPVTEREHDSSRSASSANSPELPPPASPAESGRQRLLRSSALSRQTREWLEATPARVQGATPPAEARQSPEAQQAERIVQELVRGGADLNNVRTMLRNVMDNNAVAFSRVERDILLQHFPNMPMTGISSDSVLANELRQRLRQTVRQQRIQSSTPARLADSSSGSSQRSLIGRSTMLMTPGRSSSSSAAASRTSVDRHPQGLDLESARLASAARHNHSANQTNEALRRLTQEGVDMERLRTSLGRYIMSLEPLPPDLRRALESVGINPFIPEELSLVDHPVLNFSAALNRMLASRQTTTNSPELPPLASSAESGRRRLLRSPPLLSGQREWIEQSMRQEAEPQSSRLNRAVRLAVMPPQNENEDNVAYAIRLRRLNPGADVSRVVASFITDPAARQQVVNDIRAALDIAPQFSQLRTISKADAESEELGFRDAADHPDNATSCLFGEELSLSNPDQQVIGLAVNPTDKPQPYSQEVNKALTFMDMKKLAQYLADKPEHPLNRQRLDAKNIAKYAFKIVP</sequence>
<keyword id="KW-0002">3D-structure</keyword>
<keyword id="KW-0928">Hypersensitive response elicitation</keyword>
<keyword id="KW-0614">Plasmid</keyword>
<keyword id="KW-0964">Secreted</keyword>
<keyword id="KW-0843">Virulence</keyword>
<gene>
    <name type="primary">hopAB1</name>
    <name type="synonym">virPphA</name>
    <name type="ordered locus">PSPPH_A0127</name>
</gene>
<geneLocation type="plasmid">
    <name>large</name>
</geneLocation>
<feature type="chain" id="PRO_0000236790" description="Effector protein hopAB1">
    <location>
        <begin position="1"/>
        <end position="539"/>
    </location>
</feature>
<feature type="region of interest" description="Disordered" evidence="2">
    <location>
        <begin position="1"/>
        <end position="93"/>
    </location>
</feature>
<feature type="region of interest" description="Disordered" evidence="2">
    <location>
        <begin position="163"/>
        <end position="220"/>
    </location>
</feature>
<feature type="region of interest" description="Disordered" evidence="2">
    <location>
        <begin position="230"/>
        <end position="249"/>
    </location>
</feature>
<feature type="region of interest" description="Disordered" evidence="2">
    <location>
        <begin position="315"/>
        <end position="336"/>
    </location>
</feature>
<feature type="compositionally biased region" description="Basic and acidic residues" evidence="2">
    <location>
        <begin position="18"/>
        <end position="31"/>
    </location>
</feature>
<feature type="compositionally biased region" description="Low complexity" evidence="2">
    <location>
        <begin position="181"/>
        <end position="194"/>
    </location>
</feature>
<feature type="helix" evidence="5">
    <location>
        <begin position="224"/>
        <end position="233"/>
    </location>
</feature>
<feature type="helix" evidence="5">
    <location>
        <begin position="240"/>
        <end position="252"/>
    </location>
</feature>
<feature type="helix" evidence="5">
    <location>
        <begin position="256"/>
        <end position="267"/>
    </location>
</feature>
<feature type="strand" evidence="5">
    <location>
        <begin position="268"/>
        <end position="270"/>
    </location>
</feature>
<feature type="helix" evidence="5">
    <location>
        <begin position="275"/>
        <end position="284"/>
    </location>
</feature>
<feature type="turn" evidence="5">
    <location>
        <begin position="292"/>
        <end position="297"/>
    </location>
</feature>
<feature type="helix" evidence="5">
    <location>
        <begin position="301"/>
        <end position="315"/>
    </location>
</feature>
<organism>
    <name type="scientific">Pseudomonas savastanoi pv. phaseolicola (strain 1448A / Race 6)</name>
    <name type="common">Pseudomonas syringae pv. phaseolicola (strain 1448A / Race 6)</name>
    <dbReference type="NCBI Taxonomy" id="264730"/>
    <lineage>
        <taxon>Bacteria</taxon>
        <taxon>Pseudomonadati</taxon>
        <taxon>Pseudomonadota</taxon>
        <taxon>Gammaproteobacteria</taxon>
        <taxon>Pseudomonadales</taxon>
        <taxon>Pseudomonadaceae</taxon>
        <taxon>Pseudomonas</taxon>
    </lineage>
</organism>